<name>YLK1_CAEEL</name>
<feature type="chain" id="PRO_0000065260" description="Uncharacterized kinase-like protein D1044.1">
    <location>
        <begin position="1"/>
        <end position="376"/>
    </location>
</feature>
<dbReference type="EMBL" id="BX284603">
    <property type="protein sequence ID" value="CCD68370.2"/>
    <property type="molecule type" value="Genomic_DNA"/>
</dbReference>
<dbReference type="PIR" id="T15886">
    <property type="entry name" value="T15886"/>
</dbReference>
<dbReference type="RefSeq" id="NP_001367707.1">
    <property type="nucleotide sequence ID" value="NM_001379714.2"/>
</dbReference>
<dbReference type="RefSeq" id="NP_498185.2">
    <property type="nucleotide sequence ID" value="NM_065784.4"/>
</dbReference>
<dbReference type="FunCoup" id="P41949">
    <property type="interactions" value="1"/>
</dbReference>
<dbReference type="PaxDb" id="6239-D1044.1"/>
<dbReference type="PeptideAtlas" id="P41949"/>
<dbReference type="EnsemblMetazoa" id="D1044.1.1">
    <property type="protein sequence ID" value="D1044.1.1"/>
    <property type="gene ID" value="WBGene00017027"/>
</dbReference>
<dbReference type="GeneID" id="175763"/>
<dbReference type="UCSC" id="D1044.1">
    <property type="organism name" value="c. elegans"/>
</dbReference>
<dbReference type="AGR" id="WB:WBGene00017027"/>
<dbReference type="WormBase" id="D1044.1">
    <property type="protein sequence ID" value="CE54136"/>
    <property type="gene ID" value="WBGene00017027"/>
</dbReference>
<dbReference type="eggNOG" id="ENOG502TIDS">
    <property type="taxonomic scope" value="Eukaryota"/>
</dbReference>
<dbReference type="GeneTree" id="ENSGT00530000064391"/>
<dbReference type="HOGENOM" id="CLU_047882_0_0_1"/>
<dbReference type="InParanoid" id="P41949"/>
<dbReference type="OrthoDB" id="5914377at2759"/>
<dbReference type="PhylomeDB" id="P41949"/>
<dbReference type="PRO" id="PR:P41949"/>
<dbReference type="Proteomes" id="UP000001940">
    <property type="component" value="Chromosome III"/>
</dbReference>
<dbReference type="Bgee" id="WBGene00017027">
    <property type="expression patterns" value="Expressed in material anatomical entity and 5 other cell types or tissues"/>
</dbReference>
<dbReference type="GO" id="GO:0016301">
    <property type="term" value="F:kinase activity"/>
    <property type="evidence" value="ECO:0007669"/>
    <property type="project" value="UniProtKB-KW"/>
</dbReference>
<dbReference type="Gene3D" id="3.90.1200.10">
    <property type="match status" value="1"/>
</dbReference>
<dbReference type="InterPro" id="IPR015897">
    <property type="entry name" value="CHK_kinase-like"/>
</dbReference>
<dbReference type="InterPro" id="IPR012877">
    <property type="entry name" value="Dhs-27"/>
</dbReference>
<dbReference type="InterPro" id="IPR011009">
    <property type="entry name" value="Kinase-like_dom_sf"/>
</dbReference>
<dbReference type="InterPro" id="IPR052961">
    <property type="entry name" value="Oxido-Kinase-like_Enzymes"/>
</dbReference>
<dbReference type="PANTHER" id="PTHR23020:SF41">
    <property type="entry name" value="AMINOGLYCOSIDE PHOSPHOTRANSFERASE DOMAIN-CONTAINING PROTEIN"/>
    <property type="match status" value="1"/>
</dbReference>
<dbReference type="PANTHER" id="PTHR23020">
    <property type="entry name" value="UNCHARACTERIZED NUCLEAR HORMONE RECEPTOR-RELATED"/>
    <property type="match status" value="1"/>
</dbReference>
<dbReference type="Pfam" id="PF07914">
    <property type="entry name" value="DUF1679"/>
    <property type="match status" value="1"/>
</dbReference>
<dbReference type="SMART" id="SM00587">
    <property type="entry name" value="CHK"/>
    <property type="match status" value="1"/>
</dbReference>
<dbReference type="SUPFAM" id="SSF56112">
    <property type="entry name" value="Protein kinase-like (PK-like)"/>
    <property type="match status" value="1"/>
</dbReference>
<accession>P41949</accession>
<proteinExistence type="inferred from homology"/>
<evidence type="ECO:0000305" key="1"/>
<evidence type="ECO:0000312" key="2">
    <source>
        <dbReference type="WormBase" id="D1044.1"/>
    </source>
</evidence>
<keyword id="KW-0418">Kinase</keyword>
<keyword id="KW-1185">Reference proteome</keyword>
<keyword id="KW-0808">Transferase</keyword>
<comment type="similarity">
    <text evidence="1">Belongs to the choline/ethanolamine kinase family.</text>
</comment>
<protein>
    <recommendedName>
        <fullName>Uncharacterized kinase-like protein D1044.1</fullName>
    </recommendedName>
</protein>
<organism>
    <name type="scientific">Caenorhabditis elegans</name>
    <dbReference type="NCBI Taxonomy" id="6239"/>
    <lineage>
        <taxon>Eukaryota</taxon>
        <taxon>Metazoa</taxon>
        <taxon>Ecdysozoa</taxon>
        <taxon>Nematoda</taxon>
        <taxon>Chromadorea</taxon>
        <taxon>Rhabditida</taxon>
        <taxon>Rhabditina</taxon>
        <taxon>Rhabditomorpha</taxon>
        <taxon>Rhabditoidea</taxon>
        <taxon>Rhabditidae</taxon>
        <taxon>Peloderinae</taxon>
        <taxon>Caenorhabditis</taxon>
    </lineage>
</organism>
<sequence length="376" mass="43055">MSEIAEVVPKIIEAIFSSVQEPFKTFNITIKPLENSRSFWSECYQILVTPNSEAHADKVVSPIFVKIPRISAINAACDPDNADENMEILRTLTAQEVTFYSDFSGIQFSGFPIPRSYYGENLGNEKMAGLACEDYSGKVYSIDFVPGFDESQVLQLLEALAHFHAKIIEISDEIPWKNYENVLYDAAYIRMLHNDTLDFEKLCPAELSGRIQEVKHAFDEDGVRNSEKKNEKLGMPLVICHNDLNASNVLWNNETGKIQAFIDFQHVSKGPVSFDIIRILCLGLSVENRRANTQRYLNHYYTTFKSHFSTAPFTFSQLEESYRTHFNFVNATSLFSLSYYYKMYKDESLDLKSGADEREHKAQEILRRTIGILDDM</sequence>
<gene>
    <name evidence="2" type="ORF">D1044.1</name>
</gene>
<reference key="1">
    <citation type="journal article" date="1998" name="Science">
        <title>Genome sequence of the nematode C. elegans: a platform for investigating biology.</title>
        <authorList>
            <consortium name="The C. elegans sequencing consortium"/>
        </authorList>
    </citation>
    <scope>NUCLEOTIDE SEQUENCE [LARGE SCALE GENOMIC DNA]</scope>
    <source>
        <strain>Bristol N2</strain>
    </source>
</reference>